<reference key="1">
    <citation type="journal article" date="2009" name="PLoS ONE">
        <title>Non mycobacterial virulence genes in the genome of the emerging pathogen Mycobacterium abscessus.</title>
        <authorList>
            <person name="Ripoll F."/>
            <person name="Pasek S."/>
            <person name="Schenowitz C."/>
            <person name="Dossat C."/>
            <person name="Barbe V."/>
            <person name="Rottman M."/>
            <person name="Macheras E."/>
            <person name="Heym B."/>
            <person name="Herrmann J.L."/>
            <person name="Daffe M."/>
            <person name="Brosch R."/>
            <person name="Risler J.L."/>
            <person name="Gaillard J.L."/>
        </authorList>
    </citation>
    <scope>NUCLEOTIDE SEQUENCE [LARGE SCALE GENOMIC DNA]</scope>
    <source>
        <strain>ATCC 19977 / DSM 44196 / CCUG 20993 / CIP 104536 / JCM 13569 / NCTC 13031 / TMC 1543 / L948</strain>
    </source>
</reference>
<dbReference type="EMBL" id="CU458896">
    <property type="protein sequence ID" value="CAM63114.1"/>
    <property type="molecule type" value="Genomic_DNA"/>
</dbReference>
<dbReference type="RefSeq" id="WP_005057199.1">
    <property type="nucleotide sequence ID" value="NZ_MLCG01000003.1"/>
</dbReference>
<dbReference type="SMR" id="B1MCZ3"/>
<dbReference type="GeneID" id="93379969"/>
<dbReference type="KEGG" id="mab:MAB_3036c"/>
<dbReference type="Proteomes" id="UP000007137">
    <property type="component" value="Chromosome"/>
</dbReference>
<dbReference type="GO" id="GO:0005524">
    <property type="term" value="F:ATP binding"/>
    <property type="evidence" value="ECO:0007669"/>
    <property type="project" value="UniProtKB-KW"/>
</dbReference>
<dbReference type="GO" id="GO:0003677">
    <property type="term" value="F:DNA binding"/>
    <property type="evidence" value="ECO:0007669"/>
    <property type="project" value="UniProtKB-KW"/>
</dbReference>
<dbReference type="GO" id="GO:0008270">
    <property type="term" value="F:zinc ion binding"/>
    <property type="evidence" value="ECO:0007669"/>
    <property type="project" value="UniProtKB-UniRule"/>
</dbReference>
<dbReference type="GO" id="GO:0045892">
    <property type="term" value="P:negative regulation of DNA-templated transcription"/>
    <property type="evidence" value="ECO:0007669"/>
    <property type="project" value="UniProtKB-UniRule"/>
</dbReference>
<dbReference type="HAMAP" id="MF_00440">
    <property type="entry name" value="NrdR"/>
    <property type="match status" value="1"/>
</dbReference>
<dbReference type="InterPro" id="IPR005144">
    <property type="entry name" value="ATP-cone_dom"/>
</dbReference>
<dbReference type="InterPro" id="IPR055173">
    <property type="entry name" value="NrdR-like_N"/>
</dbReference>
<dbReference type="InterPro" id="IPR003796">
    <property type="entry name" value="RNR_NrdR-like"/>
</dbReference>
<dbReference type="NCBIfam" id="TIGR00244">
    <property type="entry name" value="transcriptional regulator NrdR"/>
    <property type="match status" value="1"/>
</dbReference>
<dbReference type="PANTHER" id="PTHR30455">
    <property type="entry name" value="TRANSCRIPTIONAL REPRESSOR NRDR"/>
    <property type="match status" value="1"/>
</dbReference>
<dbReference type="PANTHER" id="PTHR30455:SF2">
    <property type="entry name" value="TRANSCRIPTIONAL REPRESSOR NRDR"/>
    <property type="match status" value="1"/>
</dbReference>
<dbReference type="Pfam" id="PF03477">
    <property type="entry name" value="ATP-cone"/>
    <property type="match status" value="1"/>
</dbReference>
<dbReference type="Pfam" id="PF22811">
    <property type="entry name" value="Zn_ribbon_NrdR"/>
    <property type="match status" value="1"/>
</dbReference>
<dbReference type="PROSITE" id="PS51161">
    <property type="entry name" value="ATP_CONE"/>
    <property type="match status" value="1"/>
</dbReference>
<evidence type="ECO:0000255" key="1">
    <source>
        <dbReference type="HAMAP-Rule" id="MF_00440"/>
    </source>
</evidence>
<protein>
    <recommendedName>
        <fullName evidence="1">Transcriptional repressor NrdR</fullName>
    </recommendedName>
</protein>
<sequence>MHCPFCRHPDSRVVDSREADEGQAIRRRRSCPECGRRFTTVETAVLAVVKRSGVTEPFSRDKVVKGVRRACQGRDVDDDALNLLAQQVEDAVRAAGSPEIPSNEVGLAILGPLRDLDEVAYLRFASVYRGFSSAEDFEREIAALRAHRDAPAES</sequence>
<keyword id="KW-0067">ATP-binding</keyword>
<keyword id="KW-0238">DNA-binding</keyword>
<keyword id="KW-0479">Metal-binding</keyword>
<keyword id="KW-0547">Nucleotide-binding</keyword>
<keyword id="KW-1185">Reference proteome</keyword>
<keyword id="KW-0678">Repressor</keyword>
<keyword id="KW-0804">Transcription</keyword>
<keyword id="KW-0805">Transcription regulation</keyword>
<keyword id="KW-0862">Zinc</keyword>
<keyword id="KW-0863">Zinc-finger</keyword>
<accession>B1MCZ3</accession>
<name>NRDR_MYCA9</name>
<comment type="function">
    <text evidence="1">Negatively regulates transcription of bacterial ribonucleotide reductase nrd genes and operons by binding to NrdR-boxes.</text>
</comment>
<comment type="cofactor">
    <cofactor evidence="1">
        <name>Zn(2+)</name>
        <dbReference type="ChEBI" id="CHEBI:29105"/>
    </cofactor>
    <text evidence="1">Binds 1 zinc ion.</text>
</comment>
<comment type="similarity">
    <text evidence="1">Belongs to the NrdR family.</text>
</comment>
<organism>
    <name type="scientific">Mycobacteroides abscessus (strain ATCC 19977 / DSM 44196 / CCUG 20993 / CIP 104536 / JCM 13569 / NCTC 13031 / TMC 1543 / L948)</name>
    <name type="common">Mycobacterium abscessus</name>
    <dbReference type="NCBI Taxonomy" id="561007"/>
    <lineage>
        <taxon>Bacteria</taxon>
        <taxon>Bacillati</taxon>
        <taxon>Actinomycetota</taxon>
        <taxon>Actinomycetes</taxon>
        <taxon>Mycobacteriales</taxon>
        <taxon>Mycobacteriaceae</taxon>
        <taxon>Mycobacteroides</taxon>
        <taxon>Mycobacteroides abscessus</taxon>
    </lineage>
</organism>
<feature type="chain" id="PRO_1000124526" description="Transcriptional repressor NrdR">
    <location>
        <begin position="1"/>
        <end position="154"/>
    </location>
</feature>
<feature type="domain" description="ATP-cone" evidence="1">
    <location>
        <begin position="46"/>
        <end position="136"/>
    </location>
</feature>
<feature type="zinc finger region" evidence="1">
    <location>
        <begin position="3"/>
        <end position="34"/>
    </location>
</feature>
<gene>
    <name evidence="1" type="primary">nrdR</name>
    <name type="ordered locus">MAB_3036c</name>
</gene>
<proteinExistence type="inferred from homology"/>